<organism>
    <name type="scientific">Shigella boydii serotype 4 (strain Sb227)</name>
    <dbReference type="NCBI Taxonomy" id="300268"/>
    <lineage>
        <taxon>Bacteria</taxon>
        <taxon>Pseudomonadati</taxon>
        <taxon>Pseudomonadota</taxon>
        <taxon>Gammaproteobacteria</taxon>
        <taxon>Enterobacterales</taxon>
        <taxon>Enterobacteriaceae</taxon>
        <taxon>Shigella</taxon>
    </lineage>
</organism>
<protein>
    <recommendedName>
        <fullName evidence="2">Sigma factor-binding protein Crl</fullName>
    </recommendedName>
</protein>
<evidence type="ECO:0000250" key="1"/>
<evidence type="ECO:0000255" key="2">
    <source>
        <dbReference type="HAMAP-Rule" id="MF_01178"/>
    </source>
</evidence>
<reference key="1">
    <citation type="journal article" date="2005" name="Nucleic Acids Res.">
        <title>Genome dynamics and diversity of Shigella species, the etiologic agents of bacillary dysentery.</title>
        <authorList>
            <person name="Yang F."/>
            <person name="Yang J."/>
            <person name="Zhang X."/>
            <person name="Chen L."/>
            <person name="Jiang Y."/>
            <person name="Yan Y."/>
            <person name="Tang X."/>
            <person name="Wang J."/>
            <person name="Xiong Z."/>
            <person name="Dong J."/>
            <person name="Xue Y."/>
            <person name="Zhu Y."/>
            <person name="Xu X."/>
            <person name="Sun L."/>
            <person name="Chen S."/>
            <person name="Nie H."/>
            <person name="Peng J."/>
            <person name="Xu J."/>
            <person name="Wang Y."/>
            <person name="Yuan Z."/>
            <person name="Wen Y."/>
            <person name="Yao Z."/>
            <person name="Shen Y."/>
            <person name="Qiang B."/>
            <person name="Hou Y."/>
            <person name="Yu J."/>
            <person name="Jin Q."/>
        </authorList>
    </citation>
    <scope>NUCLEOTIDE SEQUENCE [LARGE SCALE GENOMIC DNA]</scope>
    <source>
        <strain>Sb227</strain>
    </source>
</reference>
<keyword id="KW-0010">Activator</keyword>
<keyword id="KW-0175">Coiled coil</keyword>
<keyword id="KW-0963">Cytoplasm</keyword>
<keyword id="KW-0804">Transcription</keyword>
<keyword id="KW-0805">Transcription regulation</keyword>
<proteinExistence type="inferred from homology"/>
<feature type="initiator methionine" description="Removed" evidence="1">
    <location>
        <position position="1"/>
    </location>
</feature>
<feature type="chain" id="PRO_0000268905" description="Sigma factor-binding protein Crl">
    <location>
        <begin position="2"/>
        <end position="133"/>
    </location>
</feature>
<feature type="region of interest" description="Essential for activity" evidence="2">
    <location>
        <begin position="99"/>
        <end position="122"/>
    </location>
</feature>
<feature type="coiled-coil region" evidence="2">
    <location>
        <begin position="90"/>
        <end position="116"/>
    </location>
</feature>
<comment type="function">
    <text evidence="2">Binds to the sigma-S subunit of RNA polymerase, activating expression of sigma-S-regulated genes. Stimulates RNA polymerase holoenzyme formation and may bind to several other sigma factors, such as sigma-70 and sigma-32.</text>
</comment>
<comment type="subcellular location">
    <subcellularLocation>
        <location evidence="2">Cytoplasm</location>
    </subcellularLocation>
</comment>
<comment type="similarity">
    <text evidence="2">Belongs to the Crl family.</text>
</comment>
<gene>
    <name evidence="2" type="primary">crl</name>
    <name type="ordered locus">SBO_0246</name>
</gene>
<accession>Q325P6</accession>
<name>CRL_SHIBS</name>
<dbReference type="EMBL" id="CP000036">
    <property type="protein sequence ID" value="ABB64962.1"/>
    <property type="molecule type" value="Genomic_DNA"/>
</dbReference>
<dbReference type="RefSeq" id="WP_000174677.1">
    <property type="nucleotide sequence ID" value="NC_007613.1"/>
</dbReference>
<dbReference type="SMR" id="Q325P6"/>
<dbReference type="GeneID" id="93777153"/>
<dbReference type="KEGG" id="sbo:SBO_0246"/>
<dbReference type="HOGENOM" id="CLU_136773_0_0_6"/>
<dbReference type="Proteomes" id="UP000007067">
    <property type="component" value="Chromosome"/>
</dbReference>
<dbReference type="GO" id="GO:0005737">
    <property type="term" value="C:cytoplasm"/>
    <property type="evidence" value="ECO:0007669"/>
    <property type="project" value="UniProtKB-SubCell"/>
</dbReference>
<dbReference type="GO" id="GO:0045893">
    <property type="term" value="P:positive regulation of DNA-templated transcription"/>
    <property type="evidence" value="ECO:0007669"/>
    <property type="project" value="UniProtKB-UniRule"/>
</dbReference>
<dbReference type="FunFam" id="3.30.310.230:FF:000001">
    <property type="entry name" value="Sigma factor-binding protein Crl"/>
    <property type="match status" value="1"/>
</dbReference>
<dbReference type="Gene3D" id="3.30.310.230">
    <property type="entry name" value="Sigma factor-binding protein Crl monomer"/>
    <property type="match status" value="1"/>
</dbReference>
<dbReference type="HAMAP" id="MF_01178">
    <property type="entry name" value="Crl"/>
    <property type="match status" value="1"/>
</dbReference>
<dbReference type="InterPro" id="IPR009986">
    <property type="entry name" value="Tscrpt_reg_Crl"/>
</dbReference>
<dbReference type="InterPro" id="IPR038208">
    <property type="entry name" value="Tscrpt_reg_Crl_sf"/>
</dbReference>
<dbReference type="NCBIfam" id="NF008217">
    <property type="entry name" value="PRK10984.1"/>
    <property type="match status" value="1"/>
</dbReference>
<dbReference type="Pfam" id="PF07417">
    <property type="entry name" value="Crl"/>
    <property type="match status" value="1"/>
</dbReference>
<sequence length="133" mass="15656">MTLPSGHPKSRLIKKFTALGPYIREGKCEDNRFFFDCLAVCVNVKPAPEVREFWGWWMELEAQESRFTYSYQFGLFDKAGDWKSVPVKDTEVVERLEHTLREFHEKLRELLTTLNLKLEPADDFRDEPVKLTA</sequence>